<evidence type="ECO:0000255" key="1">
    <source>
        <dbReference type="HAMAP-Rule" id="MF_00222"/>
    </source>
</evidence>
<comment type="function">
    <text evidence="1">Involved in the biosynthesis of the chorismate, which leads to the biosynthesis of aromatic amino acids. Catalyzes the reversible NADPH linked reduction of 3-dehydroshikimate (DHSA) to yield shikimate (SA).</text>
</comment>
<comment type="catalytic activity">
    <reaction evidence="1">
        <text>shikimate + NADP(+) = 3-dehydroshikimate + NADPH + H(+)</text>
        <dbReference type="Rhea" id="RHEA:17737"/>
        <dbReference type="ChEBI" id="CHEBI:15378"/>
        <dbReference type="ChEBI" id="CHEBI:16630"/>
        <dbReference type="ChEBI" id="CHEBI:36208"/>
        <dbReference type="ChEBI" id="CHEBI:57783"/>
        <dbReference type="ChEBI" id="CHEBI:58349"/>
        <dbReference type="EC" id="1.1.1.25"/>
    </reaction>
</comment>
<comment type="pathway">
    <text evidence="1">Metabolic intermediate biosynthesis; chorismate biosynthesis; chorismate from D-erythrose 4-phosphate and phosphoenolpyruvate: step 4/7.</text>
</comment>
<comment type="subunit">
    <text evidence="1">Homodimer.</text>
</comment>
<comment type="similarity">
    <text evidence="1">Belongs to the shikimate dehydrogenase family.</text>
</comment>
<name>AROE_METVS</name>
<proteinExistence type="inferred from homology"/>
<dbReference type="EC" id="1.1.1.25" evidence="1"/>
<dbReference type="EMBL" id="CP000742">
    <property type="protein sequence ID" value="ABR54162.1"/>
    <property type="molecule type" value="Genomic_DNA"/>
</dbReference>
<dbReference type="RefSeq" id="WP_011972065.1">
    <property type="nucleotide sequence ID" value="NC_009634.1"/>
</dbReference>
<dbReference type="SMR" id="A6UNU0"/>
<dbReference type="STRING" id="406327.Mevan_0253"/>
<dbReference type="GeneID" id="5324922"/>
<dbReference type="KEGG" id="mvn:Mevan_0253"/>
<dbReference type="eggNOG" id="arCOG01033">
    <property type="taxonomic scope" value="Archaea"/>
</dbReference>
<dbReference type="HOGENOM" id="CLU_044063_4_1_2"/>
<dbReference type="OrthoDB" id="8744at2157"/>
<dbReference type="UniPathway" id="UPA00053">
    <property type="reaction ID" value="UER00087"/>
</dbReference>
<dbReference type="Proteomes" id="UP000001107">
    <property type="component" value="Chromosome"/>
</dbReference>
<dbReference type="GO" id="GO:0050661">
    <property type="term" value="F:NADP binding"/>
    <property type="evidence" value="ECO:0007669"/>
    <property type="project" value="InterPro"/>
</dbReference>
<dbReference type="GO" id="GO:0004764">
    <property type="term" value="F:shikimate 3-dehydrogenase (NADP+) activity"/>
    <property type="evidence" value="ECO:0007669"/>
    <property type="project" value="UniProtKB-UniRule"/>
</dbReference>
<dbReference type="GO" id="GO:0008652">
    <property type="term" value="P:amino acid biosynthetic process"/>
    <property type="evidence" value="ECO:0007669"/>
    <property type="project" value="UniProtKB-KW"/>
</dbReference>
<dbReference type="GO" id="GO:0009073">
    <property type="term" value="P:aromatic amino acid family biosynthetic process"/>
    <property type="evidence" value="ECO:0007669"/>
    <property type="project" value="UniProtKB-KW"/>
</dbReference>
<dbReference type="GO" id="GO:0009423">
    <property type="term" value="P:chorismate biosynthetic process"/>
    <property type="evidence" value="ECO:0007669"/>
    <property type="project" value="UniProtKB-UniRule"/>
</dbReference>
<dbReference type="GO" id="GO:0019632">
    <property type="term" value="P:shikimate metabolic process"/>
    <property type="evidence" value="ECO:0007669"/>
    <property type="project" value="InterPro"/>
</dbReference>
<dbReference type="CDD" id="cd01065">
    <property type="entry name" value="NAD_bind_Shikimate_DH"/>
    <property type="match status" value="1"/>
</dbReference>
<dbReference type="Gene3D" id="3.40.50.10860">
    <property type="entry name" value="Leucine Dehydrogenase, chain A, domain 1"/>
    <property type="match status" value="1"/>
</dbReference>
<dbReference type="Gene3D" id="3.40.50.720">
    <property type="entry name" value="NAD(P)-binding Rossmann-like Domain"/>
    <property type="match status" value="1"/>
</dbReference>
<dbReference type="HAMAP" id="MF_00222">
    <property type="entry name" value="Shikimate_DH_AroE"/>
    <property type="match status" value="1"/>
</dbReference>
<dbReference type="InterPro" id="IPR046346">
    <property type="entry name" value="Aminoacid_DH-like_N_sf"/>
</dbReference>
<dbReference type="InterPro" id="IPR036291">
    <property type="entry name" value="NAD(P)-bd_dom_sf"/>
</dbReference>
<dbReference type="InterPro" id="IPR041121">
    <property type="entry name" value="SDH_C"/>
</dbReference>
<dbReference type="InterPro" id="IPR011342">
    <property type="entry name" value="Shikimate_DH"/>
</dbReference>
<dbReference type="InterPro" id="IPR013708">
    <property type="entry name" value="Shikimate_DH-bd_N"/>
</dbReference>
<dbReference type="InterPro" id="IPR022893">
    <property type="entry name" value="Shikimate_DH_fam"/>
</dbReference>
<dbReference type="InterPro" id="IPR006151">
    <property type="entry name" value="Shikm_DH/Glu-tRNA_Rdtase"/>
</dbReference>
<dbReference type="NCBIfam" id="TIGR00507">
    <property type="entry name" value="aroE"/>
    <property type="match status" value="1"/>
</dbReference>
<dbReference type="NCBIfam" id="NF001319">
    <property type="entry name" value="PRK00258.3-3"/>
    <property type="match status" value="1"/>
</dbReference>
<dbReference type="PANTHER" id="PTHR21089:SF1">
    <property type="entry name" value="BIFUNCTIONAL 3-DEHYDROQUINATE DEHYDRATASE_SHIKIMATE DEHYDROGENASE, CHLOROPLASTIC"/>
    <property type="match status" value="1"/>
</dbReference>
<dbReference type="PANTHER" id="PTHR21089">
    <property type="entry name" value="SHIKIMATE DEHYDROGENASE"/>
    <property type="match status" value="1"/>
</dbReference>
<dbReference type="Pfam" id="PF18317">
    <property type="entry name" value="SDH_C"/>
    <property type="match status" value="1"/>
</dbReference>
<dbReference type="Pfam" id="PF01488">
    <property type="entry name" value="Shikimate_DH"/>
    <property type="match status" value="1"/>
</dbReference>
<dbReference type="Pfam" id="PF08501">
    <property type="entry name" value="Shikimate_dh_N"/>
    <property type="match status" value="1"/>
</dbReference>
<dbReference type="SUPFAM" id="SSF53223">
    <property type="entry name" value="Aminoacid dehydrogenase-like, N-terminal domain"/>
    <property type="match status" value="1"/>
</dbReference>
<dbReference type="SUPFAM" id="SSF51735">
    <property type="entry name" value="NAD(P)-binding Rossmann-fold domains"/>
    <property type="match status" value="1"/>
</dbReference>
<gene>
    <name evidence="1" type="primary">aroE</name>
    <name type="ordered locus">Mevan_0253</name>
</gene>
<reference key="1">
    <citation type="submission" date="2007-06" db="EMBL/GenBank/DDBJ databases">
        <title>Complete sequence of Methanococcus vannielii SB.</title>
        <authorList>
            <consortium name="US DOE Joint Genome Institute"/>
            <person name="Copeland A."/>
            <person name="Lucas S."/>
            <person name="Lapidus A."/>
            <person name="Barry K."/>
            <person name="Glavina del Rio T."/>
            <person name="Dalin E."/>
            <person name="Tice H."/>
            <person name="Pitluck S."/>
            <person name="Chain P."/>
            <person name="Malfatti S."/>
            <person name="Shin M."/>
            <person name="Vergez L."/>
            <person name="Schmutz J."/>
            <person name="Larimer F."/>
            <person name="Land M."/>
            <person name="Hauser L."/>
            <person name="Kyrpides N."/>
            <person name="Anderson I."/>
            <person name="Sieprawska-Lupa M."/>
            <person name="Whitman W.B."/>
            <person name="Richardson P."/>
        </authorList>
    </citation>
    <scope>NUCLEOTIDE SEQUENCE [LARGE SCALE GENOMIC DNA]</scope>
    <source>
        <strain>ATCC 35089 / DSM 1224 / JCM 13029 / OCM 148 / SB</strain>
    </source>
</reference>
<accession>A6UNU0</accession>
<keyword id="KW-0028">Amino-acid biosynthesis</keyword>
<keyword id="KW-0057">Aromatic amino acid biosynthesis</keyword>
<keyword id="KW-0521">NADP</keyword>
<keyword id="KW-0560">Oxidoreductase</keyword>
<sequence>MIDSKTVLLGLIGHPVEHSFSPIMHNAAINDLKINYVYLGFDISNENLKNVVNSAKTLSILGFNVTIPYKVEIMKYLDKIDDTAKFIGAVNTVKIENGEAVGYNTDGIGAKKSLEEEIGKFNNKNILMIGSGGSSRSISFELAKENEITIINRNIKNAKELSFEISKNLATKEYGEKYLKYGDLSTDISKFDIIINTTPVGMYPDVNSKPVIPLKNAKNDAIIMDIIYNPFEPVFLKEAKKYGLKTLNGLGMLIYQGAVSFEIWTGFKPDTNVMKNSIVNLLKS</sequence>
<organism>
    <name type="scientific">Methanococcus vannielii (strain ATCC 35089 / DSM 1224 / JCM 13029 / OCM 148 / SB)</name>
    <dbReference type="NCBI Taxonomy" id="406327"/>
    <lineage>
        <taxon>Archaea</taxon>
        <taxon>Methanobacteriati</taxon>
        <taxon>Methanobacteriota</taxon>
        <taxon>Methanomada group</taxon>
        <taxon>Methanococci</taxon>
        <taxon>Methanococcales</taxon>
        <taxon>Methanococcaceae</taxon>
        <taxon>Methanococcus</taxon>
    </lineage>
</organism>
<protein>
    <recommendedName>
        <fullName evidence="1">Shikimate dehydrogenase (NADP(+))</fullName>
        <shortName evidence="1">SDH</shortName>
        <ecNumber evidence="1">1.1.1.25</ecNumber>
    </recommendedName>
</protein>
<feature type="chain" id="PRO_1000021309" description="Shikimate dehydrogenase (NADP(+))">
    <location>
        <begin position="1"/>
        <end position="284"/>
    </location>
</feature>
<feature type="active site" description="Proton acceptor" evidence="1">
    <location>
        <position position="70"/>
    </location>
</feature>
<feature type="binding site" evidence="1">
    <location>
        <begin position="19"/>
        <end position="21"/>
    </location>
    <ligand>
        <name>shikimate</name>
        <dbReference type="ChEBI" id="CHEBI:36208"/>
    </ligand>
</feature>
<feature type="binding site" evidence="1">
    <location>
        <position position="66"/>
    </location>
    <ligand>
        <name>shikimate</name>
        <dbReference type="ChEBI" id="CHEBI:36208"/>
    </ligand>
</feature>
<feature type="binding site" evidence="1">
    <location>
        <position position="82"/>
    </location>
    <ligand>
        <name>NADP(+)</name>
        <dbReference type="ChEBI" id="CHEBI:58349"/>
    </ligand>
</feature>
<feature type="binding site" evidence="1">
    <location>
        <position position="91"/>
    </location>
    <ligand>
        <name>shikimate</name>
        <dbReference type="ChEBI" id="CHEBI:36208"/>
    </ligand>
</feature>
<feature type="binding site" evidence="1">
    <location>
        <position position="106"/>
    </location>
    <ligand>
        <name>shikimate</name>
        <dbReference type="ChEBI" id="CHEBI:36208"/>
    </ligand>
</feature>
<feature type="binding site" evidence="1">
    <location>
        <begin position="130"/>
        <end position="134"/>
    </location>
    <ligand>
        <name>NADP(+)</name>
        <dbReference type="ChEBI" id="CHEBI:58349"/>
    </ligand>
</feature>
<feature type="binding site" evidence="1">
    <location>
        <position position="226"/>
    </location>
    <ligand>
        <name>NADP(+)</name>
        <dbReference type="ChEBI" id="CHEBI:58349"/>
    </ligand>
</feature>
<feature type="binding site" evidence="1">
    <location>
        <position position="228"/>
    </location>
    <ligand>
        <name>shikimate</name>
        <dbReference type="ChEBI" id="CHEBI:36208"/>
    </ligand>
</feature>
<feature type="binding site" evidence="1">
    <location>
        <position position="249"/>
    </location>
    <ligand>
        <name>NADP(+)</name>
        <dbReference type="ChEBI" id="CHEBI:58349"/>
    </ligand>
</feature>